<feature type="chain" id="PRO_1000001353" description="LexA repressor">
    <location>
        <begin position="1"/>
        <end position="206"/>
    </location>
</feature>
<feature type="DNA-binding region" description="H-T-H motif" evidence="1">
    <location>
        <begin position="28"/>
        <end position="48"/>
    </location>
</feature>
<feature type="active site" description="For autocatalytic cleavage activity" evidence="1">
    <location>
        <position position="123"/>
    </location>
</feature>
<feature type="active site" description="For autocatalytic cleavage activity" evidence="1">
    <location>
        <position position="160"/>
    </location>
</feature>
<feature type="site" description="Cleavage; by autolysis" evidence="1">
    <location>
        <begin position="88"/>
        <end position="89"/>
    </location>
</feature>
<proteinExistence type="inferred from homology"/>
<organism>
    <name type="scientific">Vibrio campbellii (strain ATCC BAA-1116)</name>
    <dbReference type="NCBI Taxonomy" id="2902295"/>
    <lineage>
        <taxon>Bacteria</taxon>
        <taxon>Pseudomonadati</taxon>
        <taxon>Pseudomonadota</taxon>
        <taxon>Gammaproteobacteria</taxon>
        <taxon>Vibrionales</taxon>
        <taxon>Vibrionaceae</taxon>
        <taxon>Vibrio</taxon>
    </lineage>
</organism>
<gene>
    <name evidence="1" type="primary">lexA</name>
    <name type="ordered locus">VIBHAR_00268</name>
</gene>
<reference key="1">
    <citation type="submission" date="2007-08" db="EMBL/GenBank/DDBJ databases">
        <authorList>
            <consortium name="The Vibrio harveyi Genome Sequencing Project"/>
            <person name="Bassler B."/>
            <person name="Clifton S.W."/>
            <person name="Fulton L."/>
            <person name="Delehaunty K."/>
            <person name="Fronick C."/>
            <person name="Harrison M."/>
            <person name="Markivic C."/>
            <person name="Fulton R."/>
            <person name="Tin-Wollam A.-M."/>
            <person name="Shah N."/>
            <person name="Pepin K."/>
            <person name="Nash W."/>
            <person name="Thiruvilangam P."/>
            <person name="Bhonagiri V."/>
            <person name="Waters C."/>
            <person name="Tu K.C."/>
            <person name="Irgon J."/>
            <person name="Wilson R.K."/>
        </authorList>
    </citation>
    <scope>NUCLEOTIDE SEQUENCE [LARGE SCALE GENOMIC DNA]</scope>
    <source>
        <strain>ATCC BAA-1116 / BB120</strain>
    </source>
</reference>
<accession>A7N0W6</accession>
<keyword id="KW-0068">Autocatalytic cleavage</keyword>
<keyword id="KW-0227">DNA damage</keyword>
<keyword id="KW-0234">DNA repair</keyword>
<keyword id="KW-0235">DNA replication</keyword>
<keyword id="KW-0238">DNA-binding</keyword>
<keyword id="KW-0378">Hydrolase</keyword>
<keyword id="KW-0678">Repressor</keyword>
<keyword id="KW-0742">SOS response</keyword>
<keyword id="KW-0804">Transcription</keyword>
<keyword id="KW-0805">Transcription regulation</keyword>
<dbReference type="EC" id="3.4.21.88" evidence="1"/>
<dbReference type="EMBL" id="CP000789">
    <property type="protein sequence ID" value="ABU69296.1"/>
    <property type="molecule type" value="Genomic_DNA"/>
</dbReference>
<dbReference type="RefSeq" id="WP_005438488.1">
    <property type="nucleotide sequence ID" value="NC_022269.1"/>
</dbReference>
<dbReference type="SMR" id="A7N0W6"/>
<dbReference type="MEROPS" id="S24.001"/>
<dbReference type="GeneID" id="83583498"/>
<dbReference type="KEGG" id="vha:VIBHAR_00268"/>
<dbReference type="PATRIC" id="fig|338187.25.peg.2301"/>
<dbReference type="Proteomes" id="UP000008152">
    <property type="component" value="Chromosome I"/>
</dbReference>
<dbReference type="GO" id="GO:0003677">
    <property type="term" value="F:DNA binding"/>
    <property type="evidence" value="ECO:0007669"/>
    <property type="project" value="UniProtKB-UniRule"/>
</dbReference>
<dbReference type="GO" id="GO:0004252">
    <property type="term" value="F:serine-type endopeptidase activity"/>
    <property type="evidence" value="ECO:0007669"/>
    <property type="project" value="UniProtKB-UniRule"/>
</dbReference>
<dbReference type="GO" id="GO:0006281">
    <property type="term" value="P:DNA repair"/>
    <property type="evidence" value="ECO:0007669"/>
    <property type="project" value="UniProtKB-UniRule"/>
</dbReference>
<dbReference type="GO" id="GO:0006260">
    <property type="term" value="P:DNA replication"/>
    <property type="evidence" value="ECO:0007669"/>
    <property type="project" value="UniProtKB-UniRule"/>
</dbReference>
<dbReference type="GO" id="GO:0045892">
    <property type="term" value="P:negative regulation of DNA-templated transcription"/>
    <property type="evidence" value="ECO:0007669"/>
    <property type="project" value="UniProtKB-UniRule"/>
</dbReference>
<dbReference type="GO" id="GO:0006508">
    <property type="term" value="P:proteolysis"/>
    <property type="evidence" value="ECO:0007669"/>
    <property type="project" value="InterPro"/>
</dbReference>
<dbReference type="GO" id="GO:0009432">
    <property type="term" value="P:SOS response"/>
    <property type="evidence" value="ECO:0007669"/>
    <property type="project" value="UniProtKB-UniRule"/>
</dbReference>
<dbReference type="CDD" id="cd06529">
    <property type="entry name" value="S24_LexA-like"/>
    <property type="match status" value="1"/>
</dbReference>
<dbReference type="FunFam" id="1.10.10.10:FF:000009">
    <property type="entry name" value="LexA repressor"/>
    <property type="match status" value="1"/>
</dbReference>
<dbReference type="FunFam" id="2.10.109.10:FF:000001">
    <property type="entry name" value="LexA repressor"/>
    <property type="match status" value="1"/>
</dbReference>
<dbReference type="Gene3D" id="2.10.109.10">
    <property type="entry name" value="Umud Fragment, subunit A"/>
    <property type="match status" value="1"/>
</dbReference>
<dbReference type="Gene3D" id="1.10.10.10">
    <property type="entry name" value="Winged helix-like DNA-binding domain superfamily/Winged helix DNA-binding domain"/>
    <property type="match status" value="1"/>
</dbReference>
<dbReference type="HAMAP" id="MF_00015">
    <property type="entry name" value="LexA"/>
    <property type="match status" value="1"/>
</dbReference>
<dbReference type="InterPro" id="IPR006200">
    <property type="entry name" value="LexA"/>
</dbReference>
<dbReference type="InterPro" id="IPR039418">
    <property type="entry name" value="LexA-like"/>
</dbReference>
<dbReference type="InterPro" id="IPR036286">
    <property type="entry name" value="LexA/Signal_pep-like_sf"/>
</dbReference>
<dbReference type="InterPro" id="IPR006199">
    <property type="entry name" value="LexA_DNA-bd_dom"/>
</dbReference>
<dbReference type="InterPro" id="IPR050077">
    <property type="entry name" value="LexA_repressor"/>
</dbReference>
<dbReference type="InterPro" id="IPR006197">
    <property type="entry name" value="Peptidase_S24_LexA"/>
</dbReference>
<dbReference type="InterPro" id="IPR015927">
    <property type="entry name" value="Peptidase_S24_S26A/B/C"/>
</dbReference>
<dbReference type="InterPro" id="IPR036388">
    <property type="entry name" value="WH-like_DNA-bd_sf"/>
</dbReference>
<dbReference type="InterPro" id="IPR036390">
    <property type="entry name" value="WH_DNA-bd_sf"/>
</dbReference>
<dbReference type="NCBIfam" id="TIGR00498">
    <property type="entry name" value="lexA"/>
    <property type="match status" value="1"/>
</dbReference>
<dbReference type="PANTHER" id="PTHR33516">
    <property type="entry name" value="LEXA REPRESSOR"/>
    <property type="match status" value="1"/>
</dbReference>
<dbReference type="PANTHER" id="PTHR33516:SF2">
    <property type="entry name" value="LEXA REPRESSOR-RELATED"/>
    <property type="match status" value="1"/>
</dbReference>
<dbReference type="Pfam" id="PF01726">
    <property type="entry name" value="LexA_DNA_bind"/>
    <property type="match status" value="1"/>
</dbReference>
<dbReference type="Pfam" id="PF00717">
    <property type="entry name" value="Peptidase_S24"/>
    <property type="match status" value="1"/>
</dbReference>
<dbReference type="PRINTS" id="PR00726">
    <property type="entry name" value="LEXASERPTASE"/>
</dbReference>
<dbReference type="SUPFAM" id="SSF51306">
    <property type="entry name" value="LexA/Signal peptidase"/>
    <property type="match status" value="1"/>
</dbReference>
<dbReference type="SUPFAM" id="SSF46785">
    <property type="entry name" value="Winged helix' DNA-binding domain"/>
    <property type="match status" value="1"/>
</dbReference>
<sequence>MKPLTPRQQQVFDLIKSKIEDTGMPPTRAEIARELGFRSANAAEEHLKALARKQAIEIIPGASRGIRILLEDAANDDQGLPLIGQVAAGEPILAQEHVESHYQVDPAMFKPKADFLLRVNGESMKDIGIMDGDLLAVHKTQDVRDGQVVVARVDDDVTVKRLERKGSTVLLHAENEEFSPIQVDLTSQHLTIEGLAVGIIRNTDWM</sequence>
<evidence type="ECO:0000255" key="1">
    <source>
        <dbReference type="HAMAP-Rule" id="MF_00015"/>
    </source>
</evidence>
<protein>
    <recommendedName>
        <fullName evidence="1">LexA repressor</fullName>
        <ecNumber evidence="1">3.4.21.88</ecNumber>
    </recommendedName>
</protein>
<name>LEXA_VIBC1</name>
<comment type="function">
    <text evidence="1">Represses a number of genes involved in the response to DNA damage (SOS response), including recA and lexA. In the presence of single-stranded DNA, RecA interacts with LexA causing an autocatalytic cleavage which disrupts the DNA-binding part of LexA, leading to derepression of the SOS regulon and eventually DNA repair.</text>
</comment>
<comment type="catalytic activity">
    <reaction evidence="1">
        <text>Hydrolysis of Ala-|-Gly bond in repressor LexA.</text>
        <dbReference type="EC" id="3.4.21.88"/>
    </reaction>
</comment>
<comment type="subunit">
    <text evidence="1">Homodimer.</text>
</comment>
<comment type="similarity">
    <text evidence="1">Belongs to the peptidase S24 family.</text>
</comment>